<dbReference type="EC" id="3.5.1.108" evidence="1"/>
<dbReference type="EMBL" id="CP000570">
    <property type="protein sequence ID" value="ABN85006.1"/>
    <property type="molecule type" value="Genomic_DNA"/>
</dbReference>
<dbReference type="RefSeq" id="WP_004522022.1">
    <property type="nucleotide sequence ID" value="NC_009074.1"/>
</dbReference>
<dbReference type="SMR" id="A3NDV6"/>
<dbReference type="KEGG" id="bpd:BURPS668_3517"/>
<dbReference type="HOGENOM" id="CLU_046528_1_0_4"/>
<dbReference type="UniPathway" id="UPA00359">
    <property type="reaction ID" value="UER00478"/>
</dbReference>
<dbReference type="GO" id="GO:0016020">
    <property type="term" value="C:membrane"/>
    <property type="evidence" value="ECO:0007669"/>
    <property type="project" value="GOC"/>
</dbReference>
<dbReference type="GO" id="GO:0046872">
    <property type="term" value="F:metal ion binding"/>
    <property type="evidence" value="ECO:0007669"/>
    <property type="project" value="UniProtKB-KW"/>
</dbReference>
<dbReference type="GO" id="GO:0103117">
    <property type="term" value="F:UDP-3-O-acyl-N-acetylglucosamine deacetylase activity"/>
    <property type="evidence" value="ECO:0007669"/>
    <property type="project" value="UniProtKB-UniRule"/>
</dbReference>
<dbReference type="GO" id="GO:0009245">
    <property type="term" value="P:lipid A biosynthetic process"/>
    <property type="evidence" value="ECO:0007669"/>
    <property type="project" value="UniProtKB-UniRule"/>
</dbReference>
<dbReference type="Gene3D" id="3.30.230.20">
    <property type="entry name" value="lpxc deacetylase, domain 1"/>
    <property type="match status" value="1"/>
</dbReference>
<dbReference type="Gene3D" id="3.30.1700.10">
    <property type="entry name" value="lpxc deacetylase, domain 2"/>
    <property type="match status" value="1"/>
</dbReference>
<dbReference type="HAMAP" id="MF_00388">
    <property type="entry name" value="LpxC"/>
    <property type="match status" value="1"/>
</dbReference>
<dbReference type="InterPro" id="IPR020568">
    <property type="entry name" value="Ribosomal_Su5_D2-typ_SF"/>
</dbReference>
<dbReference type="InterPro" id="IPR004463">
    <property type="entry name" value="UDP-acyl_GlcNac_deAcase"/>
</dbReference>
<dbReference type="InterPro" id="IPR011334">
    <property type="entry name" value="UDP-acyl_GlcNac_deAcase_C"/>
</dbReference>
<dbReference type="InterPro" id="IPR015870">
    <property type="entry name" value="UDP-acyl_N-AcGlcN_deAcase_N"/>
</dbReference>
<dbReference type="NCBIfam" id="TIGR00325">
    <property type="entry name" value="lpxC"/>
    <property type="match status" value="1"/>
</dbReference>
<dbReference type="PANTHER" id="PTHR33694">
    <property type="entry name" value="UDP-3-O-ACYL-N-ACETYLGLUCOSAMINE DEACETYLASE 1, MITOCHONDRIAL-RELATED"/>
    <property type="match status" value="1"/>
</dbReference>
<dbReference type="PANTHER" id="PTHR33694:SF1">
    <property type="entry name" value="UDP-3-O-ACYL-N-ACETYLGLUCOSAMINE DEACETYLASE 1, MITOCHONDRIAL-RELATED"/>
    <property type="match status" value="1"/>
</dbReference>
<dbReference type="Pfam" id="PF03331">
    <property type="entry name" value="LpxC"/>
    <property type="match status" value="1"/>
</dbReference>
<dbReference type="SUPFAM" id="SSF54211">
    <property type="entry name" value="Ribosomal protein S5 domain 2-like"/>
    <property type="match status" value="2"/>
</dbReference>
<evidence type="ECO:0000255" key="1">
    <source>
        <dbReference type="HAMAP-Rule" id="MF_00388"/>
    </source>
</evidence>
<sequence length="305" mass="33554">MLKQRTIKSIVKTVGIGVHSGRKVELTLRPAAPDTGIVFSRVDLPTPVDIPASALSIGDTRLASVLQKDGVRVSTVEHLMSACAGLGIDNLYVDVTAEEIPIMDGSAATFVFLIQSAGIEEQNAAKKFIKVTKPVEIRDGDKFARLDPYFGFRLKFTIDFRHPAVDKTGQELEVDFANTSYVREIARARTFGFAHEVEMMRELGLARGGSMDNAIVLDEYRILNNDGLRYDDEFVKHKMLDAIGDLYVIGHPLLASYTAYKSGHGLNNALLRELLAHEQAYEIVTFDDPKTAPTGFGFDAQTAFA</sequence>
<reference key="1">
    <citation type="journal article" date="2010" name="Genome Biol. Evol.">
        <title>Continuing evolution of Burkholderia mallei through genome reduction and large-scale rearrangements.</title>
        <authorList>
            <person name="Losada L."/>
            <person name="Ronning C.M."/>
            <person name="DeShazer D."/>
            <person name="Woods D."/>
            <person name="Fedorova N."/>
            <person name="Kim H.S."/>
            <person name="Shabalina S.A."/>
            <person name="Pearson T.R."/>
            <person name="Brinkac L."/>
            <person name="Tan P."/>
            <person name="Nandi T."/>
            <person name="Crabtree J."/>
            <person name="Badger J."/>
            <person name="Beckstrom-Sternberg S."/>
            <person name="Saqib M."/>
            <person name="Schutzer S.E."/>
            <person name="Keim P."/>
            <person name="Nierman W.C."/>
        </authorList>
    </citation>
    <scope>NUCLEOTIDE SEQUENCE [LARGE SCALE GENOMIC DNA]</scope>
    <source>
        <strain>668</strain>
    </source>
</reference>
<comment type="function">
    <text evidence="1">Catalyzes the hydrolysis of UDP-3-O-myristoyl-N-acetylglucosamine to form UDP-3-O-myristoylglucosamine and acetate, the committed step in lipid A biosynthesis.</text>
</comment>
<comment type="catalytic activity">
    <reaction evidence="1">
        <text>a UDP-3-O-[(3R)-3-hydroxyacyl]-N-acetyl-alpha-D-glucosamine + H2O = a UDP-3-O-[(3R)-3-hydroxyacyl]-alpha-D-glucosamine + acetate</text>
        <dbReference type="Rhea" id="RHEA:67816"/>
        <dbReference type="ChEBI" id="CHEBI:15377"/>
        <dbReference type="ChEBI" id="CHEBI:30089"/>
        <dbReference type="ChEBI" id="CHEBI:137740"/>
        <dbReference type="ChEBI" id="CHEBI:173225"/>
        <dbReference type="EC" id="3.5.1.108"/>
    </reaction>
</comment>
<comment type="cofactor">
    <cofactor evidence="1">
        <name>Zn(2+)</name>
        <dbReference type="ChEBI" id="CHEBI:29105"/>
    </cofactor>
</comment>
<comment type="pathway">
    <text evidence="1">Glycolipid biosynthesis; lipid IV(A) biosynthesis; lipid IV(A) from (3R)-3-hydroxytetradecanoyl-[acyl-carrier-protein] and UDP-N-acetyl-alpha-D-glucosamine: step 2/6.</text>
</comment>
<comment type="similarity">
    <text evidence="1">Belongs to the LpxC family.</text>
</comment>
<organism>
    <name type="scientific">Burkholderia pseudomallei (strain 668)</name>
    <dbReference type="NCBI Taxonomy" id="320373"/>
    <lineage>
        <taxon>Bacteria</taxon>
        <taxon>Pseudomonadati</taxon>
        <taxon>Pseudomonadota</taxon>
        <taxon>Betaproteobacteria</taxon>
        <taxon>Burkholderiales</taxon>
        <taxon>Burkholderiaceae</taxon>
        <taxon>Burkholderia</taxon>
        <taxon>pseudomallei group</taxon>
    </lineage>
</organism>
<accession>A3NDV6</accession>
<name>LPXC_BURP6</name>
<feature type="chain" id="PRO_1000013196" description="UDP-3-O-acyl-N-acetylglucosamine deacetylase">
    <location>
        <begin position="1"/>
        <end position="305"/>
    </location>
</feature>
<feature type="active site" description="Proton donor" evidence="1">
    <location>
        <position position="264"/>
    </location>
</feature>
<feature type="binding site" evidence="1">
    <location>
        <position position="78"/>
    </location>
    <ligand>
        <name>Zn(2+)</name>
        <dbReference type="ChEBI" id="CHEBI:29105"/>
    </ligand>
</feature>
<feature type="binding site" evidence="1">
    <location>
        <position position="237"/>
    </location>
    <ligand>
        <name>Zn(2+)</name>
        <dbReference type="ChEBI" id="CHEBI:29105"/>
    </ligand>
</feature>
<feature type="binding site" evidence="1">
    <location>
        <position position="241"/>
    </location>
    <ligand>
        <name>Zn(2+)</name>
        <dbReference type="ChEBI" id="CHEBI:29105"/>
    </ligand>
</feature>
<gene>
    <name evidence="1" type="primary">lpxC</name>
    <name type="ordered locus">BURPS668_3517</name>
</gene>
<protein>
    <recommendedName>
        <fullName evidence="1">UDP-3-O-acyl-N-acetylglucosamine deacetylase</fullName>
        <shortName evidence="1">UDP-3-O-acyl-GlcNAc deacetylase</shortName>
        <ecNumber evidence="1">3.5.1.108</ecNumber>
    </recommendedName>
    <alternativeName>
        <fullName evidence="1">UDP-3-O-[R-3-hydroxymyristoyl]-N-acetylglucosamine deacetylase</fullName>
    </alternativeName>
</protein>
<keyword id="KW-0378">Hydrolase</keyword>
<keyword id="KW-0441">Lipid A biosynthesis</keyword>
<keyword id="KW-0444">Lipid biosynthesis</keyword>
<keyword id="KW-0443">Lipid metabolism</keyword>
<keyword id="KW-0479">Metal-binding</keyword>
<keyword id="KW-0862">Zinc</keyword>
<proteinExistence type="inferred from homology"/>